<protein>
    <recommendedName>
        <fullName evidence="1">Carbamoyl phosphate synthase large chain</fullName>
        <ecNumber evidence="1">6.3.4.16</ecNumber>
        <ecNumber evidence="1">6.3.5.5</ecNumber>
    </recommendedName>
    <alternativeName>
        <fullName evidence="1">Carbamoyl phosphate synthetase ammonia chain</fullName>
    </alternativeName>
</protein>
<evidence type="ECO:0000255" key="1">
    <source>
        <dbReference type="HAMAP-Rule" id="MF_01210"/>
    </source>
</evidence>
<evidence type="ECO:0000305" key="2"/>
<gene>
    <name evidence="1" type="primary">carB</name>
    <name type="synonym">pyrAB</name>
</gene>
<reference key="1">
    <citation type="journal article" date="1994" name="Microbiology">
        <title>Molecular characterization of pyrimidine biosynthesis genes from the thermophile Bacillus caldolyticus.</title>
        <authorList>
            <person name="Ghim S.Y."/>
            <person name="Nielsen P."/>
            <person name="Neuhard J."/>
        </authorList>
    </citation>
    <scope>NUCLEOTIDE SEQUENCE [GENOMIC DNA]</scope>
    <source>
        <strain>DSM 405 / NBRC 15313 / YP-T</strain>
    </source>
</reference>
<proteinExistence type="inferred from homology"/>
<dbReference type="EC" id="6.3.4.16" evidence="1"/>
<dbReference type="EC" id="6.3.5.5" evidence="1"/>
<dbReference type="EMBL" id="X73308">
    <property type="protein sequence ID" value="CAA51739.1"/>
    <property type="molecule type" value="Genomic_DNA"/>
</dbReference>
<dbReference type="PIR" id="I40169">
    <property type="entry name" value="I40169"/>
</dbReference>
<dbReference type="SMR" id="P46537"/>
<dbReference type="UniPathway" id="UPA00068">
    <property type="reaction ID" value="UER00171"/>
</dbReference>
<dbReference type="UniPathway" id="UPA00070">
    <property type="reaction ID" value="UER00115"/>
</dbReference>
<dbReference type="GO" id="GO:0005737">
    <property type="term" value="C:cytoplasm"/>
    <property type="evidence" value="ECO:0007669"/>
    <property type="project" value="TreeGrafter"/>
</dbReference>
<dbReference type="GO" id="GO:0005524">
    <property type="term" value="F:ATP binding"/>
    <property type="evidence" value="ECO:0007669"/>
    <property type="project" value="UniProtKB-UniRule"/>
</dbReference>
<dbReference type="GO" id="GO:0004087">
    <property type="term" value="F:carbamoyl-phosphate synthase (ammonia) activity"/>
    <property type="evidence" value="ECO:0007669"/>
    <property type="project" value="RHEA"/>
</dbReference>
<dbReference type="GO" id="GO:0004088">
    <property type="term" value="F:carbamoyl-phosphate synthase (glutamine-hydrolyzing) activity"/>
    <property type="evidence" value="ECO:0007669"/>
    <property type="project" value="UniProtKB-UniRule"/>
</dbReference>
<dbReference type="GO" id="GO:0046872">
    <property type="term" value="F:metal ion binding"/>
    <property type="evidence" value="ECO:0007669"/>
    <property type="project" value="UniProtKB-KW"/>
</dbReference>
<dbReference type="GO" id="GO:0044205">
    <property type="term" value="P:'de novo' UMP biosynthetic process"/>
    <property type="evidence" value="ECO:0007669"/>
    <property type="project" value="UniProtKB-UniRule"/>
</dbReference>
<dbReference type="GO" id="GO:0006541">
    <property type="term" value="P:glutamine metabolic process"/>
    <property type="evidence" value="ECO:0007669"/>
    <property type="project" value="TreeGrafter"/>
</dbReference>
<dbReference type="GO" id="GO:0006526">
    <property type="term" value="P:L-arginine biosynthetic process"/>
    <property type="evidence" value="ECO:0007669"/>
    <property type="project" value="UniProtKB-UniRule"/>
</dbReference>
<dbReference type="CDD" id="cd01424">
    <property type="entry name" value="MGS_CPS_II"/>
    <property type="match status" value="1"/>
</dbReference>
<dbReference type="FunFam" id="1.10.1030.10:FF:000002">
    <property type="entry name" value="Carbamoyl-phosphate synthase large chain"/>
    <property type="match status" value="1"/>
</dbReference>
<dbReference type="FunFam" id="3.30.1490.20:FF:000001">
    <property type="entry name" value="Carbamoyl-phosphate synthase large chain"/>
    <property type="match status" value="1"/>
</dbReference>
<dbReference type="FunFam" id="3.30.470.20:FF:000001">
    <property type="entry name" value="Carbamoyl-phosphate synthase large chain"/>
    <property type="match status" value="1"/>
</dbReference>
<dbReference type="FunFam" id="3.30.470.20:FF:000026">
    <property type="entry name" value="Carbamoyl-phosphate synthase large chain"/>
    <property type="match status" value="1"/>
</dbReference>
<dbReference type="FunFam" id="3.40.50.1380:FF:000011">
    <property type="entry name" value="Carbamoyl-phosphate synthase large chain"/>
    <property type="match status" value="1"/>
</dbReference>
<dbReference type="FunFam" id="3.40.50.20:FF:000001">
    <property type="entry name" value="Carbamoyl-phosphate synthase large chain"/>
    <property type="match status" value="2"/>
</dbReference>
<dbReference type="Gene3D" id="3.40.50.20">
    <property type="match status" value="2"/>
</dbReference>
<dbReference type="Gene3D" id="3.30.1490.20">
    <property type="entry name" value="ATP-grasp fold, A domain"/>
    <property type="match status" value="1"/>
</dbReference>
<dbReference type="Gene3D" id="3.30.470.20">
    <property type="entry name" value="ATP-grasp fold, B domain"/>
    <property type="match status" value="2"/>
</dbReference>
<dbReference type="Gene3D" id="1.10.1030.10">
    <property type="entry name" value="Carbamoyl-phosphate synthetase, large subunit oligomerisation domain"/>
    <property type="match status" value="1"/>
</dbReference>
<dbReference type="Gene3D" id="3.40.50.1380">
    <property type="entry name" value="Methylglyoxal synthase-like domain"/>
    <property type="match status" value="1"/>
</dbReference>
<dbReference type="HAMAP" id="MF_01210_A">
    <property type="entry name" value="CPSase_L_chain_A"/>
    <property type="match status" value="1"/>
</dbReference>
<dbReference type="HAMAP" id="MF_01210_B">
    <property type="entry name" value="CPSase_L_chain_B"/>
    <property type="match status" value="1"/>
</dbReference>
<dbReference type="InterPro" id="IPR011761">
    <property type="entry name" value="ATP-grasp"/>
</dbReference>
<dbReference type="InterPro" id="IPR013815">
    <property type="entry name" value="ATP_grasp_subdomain_1"/>
</dbReference>
<dbReference type="InterPro" id="IPR006275">
    <property type="entry name" value="CarbamoylP_synth_lsu"/>
</dbReference>
<dbReference type="InterPro" id="IPR005480">
    <property type="entry name" value="CarbamoylP_synth_lsu_oligo"/>
</dbReference>
<dbReference type="InterPro" id="IPR036897">
    <property type="entry name" value="CarbamoylP_synth_lsu_oligo_sf"/>
</dbReference>
<dbReference type="InterPro" id="IPR005479">
    <property type="entry name" value="CbamoylP_synth_lsu-like_ATP-bd"/>
</dbReference>
<dbReference type="InterPro" id="IPR005483">
    <property type="entry name" value="CbamoylP_synth_lsu_CPSase_dom"/>
</dbReference>
<dbReference type="InterPro" id="IPR011607">
    <property type="entry name" value="MGS-like_dom"/>
</dbReference>
<dbReference type="InterPro" id="IPR036914">
    <property type="entry name" value="MGS-like_dom_sf"/>
</dbReference>
<dbReference type="InterPro" id="IPR033937">
    <property type="entry name" value="MGS_CPS_CarB"/>
</dbReference>
<dbReference type="InterPro" id="IPR016185">
    <property type="entry name" value="PreATP-grasp_dom_sf"/>
</dbReference>
<dbReference type="NCBIfam" id="TIGR01369">
    <property type="entry name" value="CPSaseII_lrg"/>
    <property type="match status" value="1"/>
</dbReference>
<dbReference type="NCBIfam" id="NF003671">
    <property type="entry name" value="PRK05294.1"/>
    <property type="match status" value="1"/>
</dbReference>
<dbReference type="NCBIfam" id="NF009455">
    <property type="entry name" value="PRK12815.1"/>
    <property type="match status" value="1"/>
</dbReference>
<dbReference type="PANTHER" id="PTHR11405:SF53">
    <property type="entry name" value="CARBAMOYL-PHOSPHATE SYNTHASE [AMMONIA], MITOCHONDRIAL"/>
    <property type="match status" value="1"/>
</dbReference>
<dbReference type="PANTHER" id="PTHR11405">
    <property type="entry name" value="CARBAMOYLTRANSFERASE FAMILY MEMBER"/>
    <property type="match status" value="1"/>
</dbReference>
<dbReference type="Pfam" id="PF02786">
    <property type="entry name" value="CPSase_L_D2"/>
    <property type="match status" value="2"/>
</dbReference>
<dbReference type="Pfam" id="PF02787">
    <property type="entry name" value="CPSase_L_D3"/>
    <property type="match status" value="1"/>
</dbReference>
<dbReference type="Pfam" id="PF02142">
    <property type="entry name" value="MGS"/>
    <property type="match status" value="1"/>
</dbReference>
<dbReference type="PRINTS" id="PR00098">
    <property type="entry name" value="CPSASE"/>
</dbReference>
<dbReference type="SMART" id="SM01096">
    <property type="entry name" value="CPSase_L_D3"/>
    <property type="match status" value="1"/>
</dbReference>
<dbReference type="SMART" id="SM00851">
    <property type="entry name" value="MGS"/>
    <property type="match status" value="1"/>
</dbReference>
<dbReference type="SUPFAM" id="SSF48108">
    <property type="entry name" value="Carbamoyl phosphate synthetase, large subunit connection domain"/>
    <property type="match status" value="1"/>
</dbReference>
<dbReference type="SUPFAM" id="SSF56059">
    <property type="entry name" value="Glutathione synthetase ATP-binding domain-like"/>
    <property type="match status" value="2"/>
</dbReference>
<dbReference type="SUPFAM" id="SSF52335">
    <property type="entry name" value="Methylglyoxal synthase-like"/>
    <property type="match status" value="1"/>
</dbReference>
<dbReference type="SUPFAM" id="SSF52440">
    <property type="entry name" value="PreATP-grasp domain"/>
    <property type="match status" value="2"/>
</dbReference>
<dbReference type="PROSITE" id="PS50975">
    <property type="entry name" value="ATP_GRASP"/>
    <property type="match status" value="2"/>
</dbReference>
<dbReference type="PROSITE" id="PS00866">
    <property type="entry name" value="CPSASE_1"/>
    <property type="match status" value="2"/>
</dbReference>
<dbReference type="PROSITE" id="PS00867">
    <property type="entry name" value="CPSASE_2"/>
    <property type="match status" value="2"/>
</dbReference>
<dbReference type="PROSITE" id="PS51855">
    <property type="entry name" value="MGS"/>
    <property type="match status" value="1"/>
</dbReference>
<comment type="function">
    <text evidence="1">Large subunit of the glutamine-dependent carbamoyl phosphate synthetase (CPSase). CPSase catalyzes the formation of carbamoyl phosphate from the ammonia moiety of glutamine, carbonate, and phosphate donated by ATP, constituting the first step of 2 biosynthetic pathways, one leading to arginine and/or urea and the other to pyrimidine nucleotides. The large subunit (synthetase) binds the substrates ammonia (free or transferred from glutamine from the small subunit), hydrogencarbonate and ATP and carries out an ATP-coupled ligase reaction, activating hydrogencarbonate by forming carboxy phosphate which reacts with ammonia to form carbamoyl phosphate.</text>
</comment>
<comment type="catalytic activity">
    <reaction evidence="1">
        <text>hydrogencarbonate + L-glutamine + 2 ATP + H2O = carbamoyl phosphate + L-glutamate + 2 ADP + phosphate + 2 H(+)</text>
        <dbReference type="Rhea" id="RHEA:18633"/>
        <dbReference type="ChEBI" id="CHEBI:15377"/>
        <dbReference type="ChEBI" id="CHEBI:15378"/>
        <dbReference type="ChEBI" id="CHEBI:17544"/>
        <dbReference type="ChEBI" id="CHEBI:29985"/>
        <dbReference type="ChEBI" id="CHEBI:30616"/>
        <dbReference type="ChEBI" id="CHEBI:43474"/>
        <dbReference type="ChEBI" id="CHEBI:58228"/>
        <dbReference type="ChEBI" id="CHEBI:58359"/>
        <dbReference type="ChEBI" id="CHEBI:456216"/>
        <dbReference type="EC" id="6.3.5.5"/>
    </reaction>
</comment>
<comment type="catalytic activity">
    <molecule>Carbamoyl phosphate synthase large chain</molecule>
    <reaction evidence="1">
        <text>hydrogencarbonate + NH4(+) + 2 ATP = carbamoyl phosphate + 2 ADP + phosphate + 2 H(+)</text>
        <dbReference type="Rhea" id="RHEA:18029"/>
        <dbReference type="ChEBI" id="CHEBI:15378"/>
        <dbReference type="ChEBI" id="CHEBI:17544"/>
        <dbReference type="ChEBI" id="CHEBI:28938"/>
        <dbReference type="ChEBI" id="CHEBI:30616"/>
        <dbReference type="ChEBI" id="CHEBI:43474"/>
        <dbReference type="ChEBI" id="CHEBI:58228"/>
        <dbReference type="ChEBI" id="CHEBI:456216"/>
        <dbReference type="EC" id="6.3.4.16"/>
    </reaction>
</comment>
<comment type="cofactor">
    <cofactor evidence="1">
        <name>Mg(2+)</name>
        <dbReference type="ChEBI" id="CHEBI:18420"/>
    </cofactor>
    <cofactor evidence="1">
        <name>Mn(2+)</name>
        <dbReference type="ChEBI" id="CHEBI:29035"/>
    </cofactor>
    <text evidence="1">Binds 4 Mg(2+) or Mn(2+) ions per subunit.</text>
</comment>
<comment type="pathway">
    <text evidence="1">Amino-acid biosynthesis; L-arginine biosynthesis; carbamoyl phosphate from bicarbonate: step 1/1.</text>
</comment>
<comment type="pathway">
    <text evidence="1">Pyrimidine metabolism; UMP biosynthesis via de novo pathway; (S)-dihydroorotate from bicarbonate: step 1/3.</text>
</comment>
<comment type="subunit">
    <text evidence="1">Composed of two chains; the small (or glutamine) chain promotes the hydrolysis of glutamine to ammonia, which is used by the large (or ammonia) chain to synthesize carbamoyl phosphate. Tetramer of heterodimers (alpha,beta)4.</text>
</comment>
<comment type="domain">
    <text evidence="1">The large subunit is composed of 2 ATP-grasp domains that are involved in binding the 2 ATP molecules needed for carbamoyl phosphate synthesis. The N-terminal ATP-grasp domain (referred to as the carboxyphosphate synthetic component) catalyzes the ATP-dependent phosphorylation of hydrogencarbonate to carboxyphosphate and the subsequent nucleophilic attack by ammonia to form a carbamate intermediate. The C-terminal ATP-grasp domain (referred to as the carbamoyl phosphate synthetic component) then catalyzes the phosphorylation of carbamate with the second ATP to form the end product carbamoyl phosphate. The reactive and unstable enzyme intermediates are sequentially channeled from one active site to the next through the interior of the protein over a distance of at least 96 A.</text>
</comment>
<comment type="similarity">
    <text evidence="1 2">Belongs to the CarB family.</text>
</comment>
<organism>
    <name type="scientific">Bacillus caldolyticus</name>
    <dbReference type="NCBI Taxonomy" id="1394"/>
    <lineage>
        <taxon>Bacteria</taxon>
        <taxon>Bacillati</taxon>
        <taxon>Bacillota</taxon>
        <taxon>Bacilli</taxon>
        <taxon>Bacillales</taxon>
        <taxon>Anoxybacillaceae</taxon>
        <taxon>Geobacillus</taxon>
        <taxon>Geobacillus thermoleovorans group</taxon>
    </lineage>
</organism>
<sequence length="1065" mass="116483">MPKRRDIETILVIGSGPIVIGQAAEFDYAGTQACLALKEEGYKVILVNSNPATIMTDTEIADKVYMEPLTLDFVARIIRKERPDAILPTLGGQTGLNLAVELAKAGVLEECGVEILGTKLEAIEKAEDREQFRALMNELGEPVPESAIIHSLEEAYAFVEQIGYPVIVRPAFTLGGTGGGICTNEEELVEIVSTGLKLSPVHQCLLERSIAGYKEIEYEVMRDANDNAIVVCNMENIDPVGIHTGDSIVVAPSQTLSDREYQLLRNASLKIIRALGIEGGCNVQLALDPDSFRYYVIEVNPRVSRSSALASKATGYPIAKLAAKIAVGLTLDEMINPVTGKTYACFEPALDYVVTKIPRFPFDKFESANRRLGTQMKATGEVMAIGRTFEESLLKAVRSLEIGVHHLELNEAKTAADDVMEKRIRKAGDERLFYIAEALRRGVTVETLHEWSQIDRFFLHKIQNIIEMETVLKNHPGDLDVLKKAKGLGFSDAAIAALWNKTERDIYAVRRQRGIMPVYKMVDTCAAEFTSETPYYYSTYEEENESIVTEKPSVIVLGSGPIRIGQGIEFDYATVHCVWAIKQAGYEAIIINNNPETVSTDFSTSDKLYFEPLTAEDVMHVIDLEQPIGVIVQFGGQTAINLAAELEARGVRLLGTTLEDLDRAEDRDKFEQALSELGIPKPAGKTAVSVEEAVAIAEEIGYPVLVRPSYVLGGRAMEIVYNRGELLHYMEHAVRVNPQHPVLVDRYITGKEVEVDAIADGETVVIPGIMEHIERAGVHSGDSIAVYPPQTLSAEVIDKIADYTIRLARGLHIVGLLNIQFVVSGSDVYVLEVNPRSSRTVPFLSKITGVPMANLATKAILGTKLAEMGYETGVCPVRPGVYVKVPVFSFAKLRNVDISLGPEMKSTGEVIGKDVTFEKALYKGLVASGIHIQPHGAVLLTVADKDKEEAVELARRFADIGYQLLATNGTAETLKAAGIPVTVVNKIHSASPNILDVIRQGKAQVVINTLTKGKQPESDGFRIRREAVENGIPCLTSLDTARAMLQVLESMTFSTTAMTEGLVRS</sequence>
<keyword id="KW-0028">Amino-acid biosynthesis</keyword>
<keyword id="KW-0055">Arginine biosynthesis</keyword>
<keyword id="KW-0067">ATP-binding</keyword>
<keyword id="KW-0436">Ligase</keyword>
<keyword id="KW-0460">Magnesium</keyword>
<keyword id="KW-0464">Manganese</keyword>
<keyword id="KW-0479">Metal-binding</keyword>
<keyword id="KW-0547">Nucleotide-binding</keyword>
<keyword id="KW-0665">Pyrimidine biosynthesis</keyword>
<keyword id="KW-0677">Repeat</keyword>
<feature type="chain" id="PRO_0000144986" description="Carbamoyl phosphate synthase large chain">
    <location>
        <begin position="1"/>
        <end position="1065"/>
    </location>
</feature>
<feature type="domain" description="ATP-grasp 1" evidence="1">
    <location>
        <begin position="133"/>
        <end position="327"/>
    </location>
</feature>
<feature type="domain" description="ATP-grasp 2" evidence="1">
    <location>
        <begin position="671"/>
        <end position="861"/>
    </location>
</feature>
<feature type="domain" description="MGS-like" evidence="1">
    <location>
        <begin position="930"/>
        <end position="1065"/>
    </location>
</feature>
<feature type="region of interest" description="Carboxyphosphate synthetic domain" evidence="1">
    <location>
        <begin position="1"/>
        <end position="401"/>
    </location>
</feature>
<feature type="region of interest" description="Oligomerization domain" evidence="1">
    <location>
        <begin position="402"/>
        <end position="546"/>
    </location>
</feature>
<feature type="region of interest" description="Carbamoyl phosphate synthetic domain" evidence="1">
    <location>
        <begin position="547"/>
        <end position="929"/>
    </location>
</feature>
<feature type="region of interest" description="Allosteric domain" evidence="1">
    <location>
        <begin position="930"/>
        <end position="1065"/>
    </location>
</feature>
<feature type="binding site" evidence="1">
    <location>
        <position position="129"/>
    </location>
    <ligand>
        <name>ATP</name>
        <dbReference type="ChEBI" id="CHEBI:30616"/>
        <label>1</label>
    </ligand>
</feature>
<feature type="binding site" evidence="1">
    <location>
        <position position="169"/>
    </location>
    <ligand>
        <name>ATP</name>
        <dbReference type="ChEBI" id="CHEBI:30616"/>
        <label>1</label>
    </ligand>
</feature>
<feature type="binding site" evidence="1">
    <location>
        <position position="175"/>
    </location>
    <ligand>
        <name>ATP</name>
        <dbReference type="ChEBI" id="CHEBI:30616"/>
        <label>1</label>
    </ligand>
</feature>
<feature type="binding site" evidence="1">
    <location>
        <position position="176"/>
    </location>
    <ligand>
        <name>ATP</name>
        <dbReference type="ChEBI" id="CHEBI:30616"/>
        <label>1</label>
    </ligand>
</feature>
<feature type="binding site" evidence="1">
    <location>
        <position position="208"/>
    </location>
    <ligand>
        <name>ATP</name>
        <dbReference type="ChEBI" id="CHEBI:30616"/>
        <label>1</label>
    </ligand>
</feature>
<feature type="binding site" evidence="1">
    <location>
        <position position="210"/>
    </location>
    <ligand>
        <name>ATP</name>
        <dbReference type="ChEBI" id="CHEBI:30616"/>
        <label>1</label>
    </ligand>
</feature>
<feature type="binding site" evidence="1">
    <location>
        <position position="215"/>
    </location>
    <ligand>
        <name>ATP</name>
        <dbReference type="ChEBI" id="CHEBI:30616"/>
        <label>1</label>
    </ligand>
</feature>
<feature type="binding site" evidence="1">
    <location>
        <position position="241"/>
    </location>
    <ligand>
        <name>ATP</name>
        <dbReference type="ChEBI" id="CHEBI:30616"/>
        <label>1</label>
    </ligand>
</feature>
<feature type="binding site" evidence="1">
    <location>
        <position position="242"/>
    </location>
    <ligand>
        <name>ATP</name>
        <dbReference type="ChEBI" id="CHEBI:30616"/>
        <label>1</label>
    </ligand>
</feature>
<feature type="binding site" evidence="1">
    <location>
        <position position="243"/>
    </location>
    <ligand>
        <name>ATP</name>
        <dbReference type="ChEBI" id="CHEBI:30616"/>
        <label>1</label>
    </ligand>
</feature>
<feature type="binding site" evidence="1">
    <location>
        <position position="284"/>
    </location>
    <ligand>
        <name>ATP</name>
        <dbReference type="ChEBI" id="CHEBI:30616"/>
        <label>1</label>
    </ligand>
</feature>
<feature type="binding site" evidence="1">
    <location>
        <position position="284"/>
    </location>
    <ligand>
        <name>Mg(2+)</name>
        <dbReference type="ChEBI" id="CHEBI:18420"/>
        <label>1</label>
    </ligand>
</feature>
<feature type="binding site" evidence="1">
    <location>
        <position position="284"/>
    </location>
    <ligand>
        <name>Mn(2+)</name>
        <dbReference type="ChEBI" id="CHEBI:29035"/>
        <label>1</label>
    </ligand>
</feature>
<feature type="binding site" evidence="1">
    <location>
        <position position="298"/>
    </location>
    <ligand>
        <name>ATP</name>
        <dbReference type="ChEBI" id="CHEBI:30616"/>
        <label>1</label>
    </ligand>
</feature>
<feature type="binding site" evidence="1">
    <location>
        <position position="298"/>
    </location>
    <ligand>
        <name>Mg(2+)</name>
        <dbReference type="ChEBI" id="CHEBI:18420"/>
        <label>1</label>
    </ligand>
</feature>
<feature type="binding site" evidence="1">
    <location>
        <position position="298"/>
    </location>
    <ligand>
        <name>Mg(2+)</name>
        <dbReference type="ChEBI" id="CHEBI:18420"/>
        <label>2</label>
    </ligand>
</feature>
<feature type="binding site" evidence="1">
    <location>
        <position position="298"/>
    </location>
    <ligand>
        <name>Mn(2+)</name>
        <dbReference type="ChEBI" id="CHEBI:29035"/>
        <label>1</label>
    </ligand>
</feature>
<feature type="binding site" evidence="1">
    <location>
        <position position="298"/>
    </location>
    <ligand>
        <name>Mn(2+)</name>
        <dbReference type="ChEBI" id="CHEBI:29035"/>
        <label>2</label>
    </ligand>
</feature>
<feature type="binding site" evidence="1">
    <location>
        <position position="300"/>
    </location>
    <ligand>
        <name>Mg(2+)</name>
        <dbReference type="ChEBI" id="CHEBI:18420"/>
        <label>2</label>
    </ligand>
</feature>
<feature type="binding site" evidence="1">
    <location>
        <position position="300"/>
    </location>
    <ligand>
        <name>Mn(2+)</name>
        <dbReference type="ChEBI" id="CHEBI:29035"/>
        <label>2</label>
    </ligand>
</feature>
<feature type="binding site" evidence="1">
    <location>
        <position position="707"/>
    </location>
    <ligand>
        <name>ATP</name>
        <dbReference type="ChEBI" id="CHEBI:30616"/>
        <label>2</label>
    </ligand>
</feature>
<feature type="binding site" evidence="1">
    <location>
        <position position="746"/>
    </location>
    <ligand>
        <name>ATP</name>
        <dbReference type="ChEBI" id="CHEBI:30616"/>
        <label>2</label>
    </ligand>
</feature>
<feature type="binding site" evidence="1">
    <location>
        <position position="748"/>
    </location>
    <ligand>
        <name>ATP</name>
        <dbReference type="ChEBI" id="CHEBI:30616"/>
        <label>2</label>
    </ligand>
</feature>
<feature type="binding site" evidence="1">
    <location>
        <position position="752"/>
    </location>
    <ligand>
        <name>ATP</name>
        <dbReference type="ChEBI" id="CHEBI:30616"/>
        <label>2</label>
    </ligand>
</feature>
<feature type="binding site" evidence="1">
    <location>
        <position position="777"/>
    </location>
    <ligand>
        <name>ATP</name>
        <dbReference type="ChEBI" id="CHEBI:30616"/>
        <label>2</label>
    </ligand>
</feature>
<feature type="binding site" evidence="1">
    <location>
        <position position="778"/>
    </location>
    <ligand>
        <name>ATP</name>
        <dbReference type="ChEBI" id="CHEBI:30616"/>
        <label>2</label>
    </ligand>
</feature>
<feature type="binding site" evidence="1">
    <location>
        <position position="779"/>
    </location>
    <ligand>
        <name>ATP</name>
        <dbReference type="ChEBI" id="CHEBI:30616"/>
        <label>2</label>
    </ligand>
</feature>
<feature type="binding site" evidence="1">
    <location>
        <position position="780"/>
    </location>
    <ligand>
        <name>ATP</name>
        <dbReference type="ChEBI" id="CHEBI:30616"/>
        <label>2</label>
    </ligand>
</feature>
<feature type="binding site" evidence="1">
    <location>
        <position position="820"/>
    </location>
    <ligand>
        <name>ATP</name>
        <dbReference type="ChEBI" id="CHEBI:30616"/>
        <label>2</label>
    </ligand>
</feature>
<feature type="binding site" evidence="1">
    <location>
        <position position="820"/>
    </location>
    <ligand>
        <name>Mg(2+)</name>
        <dbReference type="ChEBI" id="CHEBI:18420"/>
        <label>3</label>
    </ligand>
</feature>
<feature type="binding site" evidence="1">
    <location>
        <position position="820"/>
    </location>
    <ligand>
        <name>Mn(2+)</name>
        <dbReference type="ChEBI" id="CHEBI:29035"/>
        <label>3</label>
    </ligand>
</feature>
<feature type="binding site" evidence="1">
    <location>
        <position position="832"/>
    </location>
    <ligand>
        <name>ATP</name>
        <dbReference type="ChEBI" id="CHEBI:30616"/>
        <label>2</label>
    </ligand>
</feature>
<feature type="binding site" evidence="1">
    <location>
        <position position="832"/>
    </location>
    <ligand>
        <name>Mg(2+)</name>
        <dbReference type="ChEBI" id="CHEBI:18420"/>
        <label>3</label>
    </ligand>
</feature>
<feature type="binding site" evidence="1">
    <location>
        <position position="832"/>
    </location>
    <ligand>
        <name>Mg(2+)</name>
        <dbReference type="ChEBI" id="CHEBI:18420"/>
        <label>4</label>
    </ligand>
</feature>
<feature type="binding site" evidence="1">
    <location>
        <position position="832"/>
    </location>
    <ligand>
        <name>Mn(2+)</name>
        <dbReference type="ChEBI" id="CHEBI:29035"/>
        <label>3</label>
    </ligand>
</feature>
<feature type="binding site" evidence="1">
    <location>
        <position position="832"/>
    </location>
    <ligand>
        <name>Mn(2+)</name>
        <dbReference type="ChEBI" id="CHEBI:29035"/>
        <label>4</label>
    </ligand>
</feature>
<feature type="binding site" evidence="1">
    <location>
        <position position="834"/>
    </location>
    <ligand>
        <name>Mg(2+)</name>
        <dbReference type="ChEBI" id="CHEBI:18420"/>
        <label>4</label>
    </ligand>
</feature>
<feature type="binding site" evidence="1">
    <location>
        <position position="834"/>
    </location>
    <ligand>
        <name>Mn(2+)</name>
        <dbReference type="ChEBI" id="CHEBI:29035"/>
        <label>4</label>
    </ligand>
</feature>
<accession>P46537</accession>
<name>CARB_BACCL</name>